<accession>Q6FZG1</accession>
<organism>
    <name type="scientific">Bartonella quintana (strain Toulouse)</name>
    <name type="common">Rochalimaea quintana</name>
    <dbReference type="NCBI Taxonomy" id="283165"/>
    <lineage>
        <taxon>Bacteria</taxon>
        <taxon>Pseudomonadati</taxon>
        <taxon>Pseudomonadota</taxon>
        <taxon>Alphaproteobacteria</taxon>
        <taxon>Hyphomicrobiales</taxon>
        <taxon>Bartonellaceae</taxon>
        <taxon>Bartonella</taxon>
    </lineage>
</organism>
<evidence type="ECO:0000255" key="1">
    <source>
        <dbReference type="HAMAP-Rule" id="MF_00151"/>
    </source>
</evidence>
<comment type="function">
    <text evidence="1">Reversibly transfers an adenylyl group from ATP to 4'-phosphopantetheine, yielding dephospho-CoA (dPCoA) and pyrophosphate.</text>
</comment>
<comment type="catalytic activity">
    <reaction evidence="1">
        <text>(R)-4'-phosphopantetheine + ATP + H(+) = 3'-dephospho-CoA + diphosphate</text>
        <dbReference type="Rhea" id="RHEA:19801"/>
        <dbReference type="ChEBI" id="CHEBI:15378"/>
        <dbReference type="ChEBI" id="CHEBI:30616"/>
        <dbReference type="ChEBI" id="CHEBI:33019"/>
        <dbReference type="ChEBI" id="CHEBI:57328"/>
        <dbReference type="ChEBI" id="CHEBI:61723"/>
        <dbReference type="EC" id="2.7.7.3"/>
    </reaction>
</comment>
<comment type="cofactor">
    <cofactor evidence="1">
        <name>Mg(2+)</name>
        <dbReference type="ChEBI" id="CHEBI:18420"/>
    </cofactor>
</comment>
<comment type="pathway">
    <text evidence="1">Cofactor biosynthesis; coenzyme A biosynthesis; CoA from (R)-pantothenate: step 4/5.</text>
</comment>
<comment type="subunit">
    <text evidence="1">Homohexamer.</text>
</comment>
<comment type="subcellular location">
    <subcellularLocation>
        <location evidence="1">Cytoplasm</location>
    </subcellularLocation>
</comment>
<comment type="similarity">
    <text evidence="1">Belongs to the bacterial CoaD family.</text>
</comment>
<reference key="1">
    <citation type="journal article" date="2004" name="Proc. Natl. Acad. Sci. U.S.A.">
        <title>The louse-borne human pathogen Bartonella quintana is a genomic derivative of the zoonotic agent Bartonella henselae.</title>
        <authorList>
            <person name="Alsmark U.C.M."/>
            <person name="Frank A.C."/>
            <person name="Karlberg E.O."/>
            <person name="Legault B.-A."/>
            <person name="Ardell D.H."/>
            <person name="Canbaeck B."/>
            <person name="Eriksson A.-S."/>
            <person name="Naeslund A.K."/>
            <person name="Handley S.A."/>
            <person name="Huvet M."/>
            <person name="La Scola B."/>
            <person name="Holmberg M."/>
            <person name="Andersson S.G.E."/>
        </authorList>
    </citation>
    <scope>NUCLEOTIDE SEQUENCE [LARGE SCALE GENOMIC DNA]</scope>
    <source>
        <strain>Toulouse</strain>
    </source>
</reference>
<sequence length="172" mass="18543">MKIALYAGSFDPLTNGHIAILQGSFVLADKVVVAIGIQAKKKSLFSFEERVDLITQVGKDLLSIGPDRLQVISFDTLLIDKAREIGASFLIRGLRDGTDLDYEMQMAGMNGVMAPELQTVFLPASVSGRAITSTLVRQIASMGGDVSAFVPPNVERALHLKFQSSRENGCVS</sequence>
<name>COAD_BARQU</name>
<protein>
    <recommendedName>
        <fullName evidence="1">Phosphopantetheine adenylyltransferase</fullName>
        <ecNumber evidence="1">2.7.7.3</ecNumber>
    </recommendedName>
    <alternativeName>
        <fullName evidence="1">Dephospho-CoA pyrophosphorylase</fullName>
    </alternativeName>
    <alternativeName>
        <fullName evidence="1">Pantetheine-phosphate adenylyltransferase</fullName>
        <shortName evidence="1">PPAT</shortName>
    </alternativeName>
</protein>
<feature type="chain" id="PRO_0000156173" description="Phosphopantetheine adenylyltransferase">
    <location>
        <begin position="1"/>
        <end position="172"/>
    </location>
</feature>
<feature type="binding site" evidence="1">
    <location>
        <begin position="9"/>
        <end position="10"/>
    </location>
    <ligand>
        <name>ATP</name>
        <dbReference type="ChEBI" id="CHEBI:30616"/>
    </ligand>
</feature>
<feature type="binding site" evidence="1">
    <location>
        <position position="9"/>
    </location>
    <ligand>
        <name>substrate</name>
    </ligand>
</feature>
<feature type="binding site" evidence="1">
    <location>
        <position position="17"/>
    </location>
    <ligand>
        <name>ATP</name>
        <dbReference type="ChEBI" id="CHEBI:30616"/>
    </ligand>
</feature>
<feature type="binding site" evidence="1">
    <location>
        <position position="41"/>
    </location>
    <ligand>
        <name>substrate</name>
    </ligand>
</feature>
<feature type="binding site" evidence="1">
    <location>
        <position position="78"/>
    </location>
    <ligand>
        <name>substrate</name>
    </ligand>
</feature>
<feature type="binding site" evidence="1">
    <location>
        <position position="92"/>
    </location>
    <ligand>
        <name>substrate</name>
    </ligand>
</feature>
<feature type="binding site" evidence="1">
    <location>
        <begin position="93"/>
        <end position="95"/>
    </location>
    <ligand>
        <name>ATP</name>
        <dbReference type="ChEBI" id="CHEBI:30616"/>
    </ligand>
</feature>
<feature type="binding site" evidence="1">
    <location>
        <position position="103"/>
    </location>
    <ligand>
        <name>ATP</name>
        <dbReference type="ChEBI" id="CHEBI:30616"/>
    </ligand>
</feature>
<feature type="binding site" evidence="1">
    <location>
        <begin position="128"/>
        <end position="134"/>
    </location>
    <ligand>
        <name>ATP</name>
        <dbReference type="ChEBI" id="CHEBI:30616"/>
    </ligand>
</feature>
<feature type="site" description="Transition state stabilizer" evidence="1">
    <location>
        <position position="17"/>
    </location>
</feature>
<proteinExistence type="inferred from homology"/>
<gene>
    <name evidence="1" type="primary">coaD</name>
    <name type="ordered locus">BQ07840</name>
</gene>
<keyword id="KW-0067">ATP-binding</keyword>
<keyword id="KW-0173">Coenzyme A biosynthesis</keyword>
<keyword id="KW-0963">Cytoplasm</keyword>
<keyword id="KW-0460">Magnesium</keyword>
<keyword id="KW-0547">Nucleotide-binding</keyword>
<keyword id="KW-0548">Nucleotidyltransferase</keyword>
<keyword id="KW-0808">Transferase</keyword>
<dbReference type="EC" id="2.7.7.3" evidence="1"/>
<dbReference type="EMBL" id="BX897700">
    <property type="protein sequence ID" value="CAF26267.1"/>
    <property type="molecule type" value="Genomic_DNA"/>
</dbReference>
<dbReference type="RefSeq" id="WP_011179514.1">
    <property type="nucleotide sequence ID" value="NC_005955.1"/>
</dbReference>
<dbReference type="SMR" id="Q6FZG1"/>
<dbReference type="KEGG" id="bqu:BQ07840"/>
<dbReference type="eggNOG" id="COG0669">
    <property type="taxonomic scope" value="Bacteria"/>
</dbReference>
<dbReference type="HOGENOM" id="CLU_100149_0_1_5"/>
<dbReference type="OrthoDB" id="9806661at2"/>
<dbReference type="UniPathway" id="UPA00241">
    <property type="reaction ID" value="UER00355"/>
</dbReference>
<dbReference type="Proteomes" id="UP000000597">
    <property type="component" value="Chromosome"/>
</dbReference>
<dbReference type="GO" id="GO:0005737">
    <property type="term" value="C:cytoplasm"/>
    <property type="evidence" value="ECO:0007669"/>
    <property type="project" value="UniProtKB-SubCell"/>
</dbReference>
<dbReference type="GO" id="GO:0005524">
    <property type="term" value="F:ATP binding"/>
    <property type="evidence" value="ECO:0007669"/>
    <property type="project" value="UniProtKB-KW"/>
</dbReference>
<dbReference type="GO" id="GO:0004595">
    <property type="term" value="F:pantetheine-phosphate adenylyltransferase activity"/>
    <property type="evidence" value="ECO:0007669"/>
    <property type="project" value="UniProtKB-UniRule"/>
</dbReference>
<dbReference type="GO" id="GO:0015937">
    <property type="term" value="P:coenzyme A biosynthetic process"/>
    <property type="evidence" value="ECO:0007669"/>
    <property type="project" value="UniProtKB-UniRule"/>
</dbReference>
<dbReference type="CDD" id="cd02163">
    <property type="entry name" value="PPAT"/>
    <property type="match status" value="1"/>
</dbReference>
<dbReference type="Gene3D" id="3.40.50.620">
    <property type="entry name" value="HUPs"/>
    <property type="match status" value="1"/>
</dbReference>
<dbReference type="HAMAP" id="MF_00151">
    <property type="entry name" value="PPAT_bact"/>
    <property type="match status" value="1"/>
</dbReference>
<dbReference type="InterPro" id="IPR004821">
    <property type="entry name" value="Cyt_trans-like"/>
</dbReference>
<dbReference type="InterPro" id="IPR001980">
    <property type="entry name" value="PPAT"/>
</dbReference>
<dbReference type="InterPro" id="IPR014729">
    <property type="entry name" value="Rossmann-like_a/b/a_fold"/>
</dbReference>
<dbReference type="NCBIfam" id="TIGR01510">
    <property type="entry name" value="coaD_prev_kdtB"/>
    <property type="match status" value="1"/>
</dbReference>
<dbReference type="NCBIfam" id="TIGR00125">
    <property type="entry name" value="cyt_tran_rel"/>
    <property type="match status" value="1"/>
</dbReference>
<dbReference type="PANTHER" id="PTHR21342">
    <property type="entry name" value="PHOSPHOPANTETHEINE ADENYLYLTRANSFERASE"/>
    <property type="match status" value="1"/>
</dbReference>
<dbReference type="PANTHER" id="PTHR21342:SF1">
    <property type="entry name" value="PHOSPHOPANTETHEINE ADENYLYLTRANSFERASE"/>
    <property type="match status" value="1"/>
</dbReference>
<dbReference type="Pfam" id="PF01467">
    <property type="entry name" value="CTP_transf_like"/>
    <property type="match status" value="1"/>
</dbReference>
<dbReference type="PRINTS" id="PR01020">
    <property type="entry name" value="LPSBIOSNTHSS"/>
</dbReference>
<dbReference type="SUPFAM" id="SSF52374">
    <property type="entry name" value="Nucleotidylyl transferase"/>
    <property type="match status" value="1"/>
</dbReference>